<accession>Q5R4R3</accession>
<comment type="function">
    <text evidence="2">Prolyl 3-hydroxylase that catalyzes 3-hydroxylation of 'Pro-62' of small ribosomal subunit uS12 (RPS23), thereby regulating protein translation termination efficiency. Involved in stress granule formation.</text>
</comment>
<comment type="catalytic activity">
    <reaction evidence="2">
        <text>[ribosomal protein uS12]-L-proline + 2-oxoglutarate + O2 = [ribosomal protein uS12]-(3S)-3-hydroxy-L-proline + succinate + CO2</text>
        <dbReference type="Rhea" id="RHEA:54156"/>
        <dbReference type="Rhea" id="RHEA-COMP:13816"/>
        <dbReference type="Rhea" id="RHEA-COMP:13818"/>
        <dbReference type="ChEBI" id="CHEBI:15379"/>
        <dbReference type="ChEBI" id="CHEBI:16526"/>
        <dbReference type="ChEBI" id="CHEBI:16810"/>
        <dbReference type="ChEBI" id="CHEBI:30031"/>
        <dbReference type="ChEBI" id="CHEBI:50342"/>
        <dbReference type="ChEBI" id="CHEBI:85428"/>
    </reaction>
</comment>
<comment type="cofactor">
    <cofactor evidence="3">
        <name>Fe(2+)</name>
        <dbReference type="ChEBI" id="CHEBI:29033"/>
    </cofactor>
    <text evidence="3">Binds 1 Fe(2+) ion per subunit.</text>
</comment>
<comment type="cofactor">
    <cofactor evidence="2">
        <name>L-ascorbate</name>
        <dbReference type="ChEBI" id="CHEBI:38290"/>
    </cofactor>
</comment>
<comment type="subunit">
    <text evidence="2">Monomer.</text>
</comment>
<comment type="subcellular location">
    <subcellularLocation>
        <location evidence="2">Cytoplasm</location>
    </subcellularLocation>
    <subcellularLocation>
        <location evidence="2">Nucleus</location>
    </subcellularLocation>
</comment>
<comment type="similarity">
    <text evidence="5">Belongs to the TPA1 family.</text>
</comment>
<reference key="1">
    <citation type="submission" date="2004-11" db="EMBL/GenBank/DDBJ databases">
        <authorList>
            <consortium name="The German cDNA consortium"/>
        </authorList>
    </citation>
    <scope>NUCLEOTIDE SEQUENCE [LARGE SCALE MRNA]</scope>
    <source>
        <tissue>Brain cortex</tissue>
    </source>
</reference>
<organism>
    <name type="scientific">Pongo abelii</name>
    <name type="common">Sumatran orangutan</name>
    <name type="synonym">Pongo pygmaeus abelii</name>
    <dbReference type="NCBI Taxonomy" id="9601"/>
    <lineage>
        <taxon>Eukaryota</taxon>
        <taxon>Metazoa</taxon>
        <taxon>Chordata</taxon>
        <taxon>Craniata</taxon>
        <taxon>Vertebrata</taxon>
        <taxon>Euteleostomi</taxon>
        <taxon>Mammalia</taxon>
        <taxon>Eutheria</taxon>
        <taxon>Euarchontoglires</taxon>
        <taxon>Primates</taxon>
        <taxon>Haplorrhini</taxon>
        <taxon>Catarrhini</taxon>
        <taxon>Hominidae</taxon>
        <taxon>Pongo</taxon>
    </lineage>
</organism>
<name>OGFD1_PONAB</name>
<keyword id="KW-0963">Cytoplasm</keyword>
<keyword id="KW-0223">Dioxygenase</keyword>
<keyword id="KW-0408">Iron</keyword>
<keyword id="KW-0479">Metal-binding</keyword>
<keyword id="KW-0539">Nucleus</keyword>
<keyword id="KW-0560">Oxidoreductase</keyword>
<keyword id="KW-1185">Reference proteome</keyword>
<keyword id="KW-0847">Vitamin C</keyword>
<feature type="chain" id="PRO_0000288976" description="Prolyl 3-hydroxylase OGFOD1">
    <location>
        <begin position="1"/>
        <end position="542"/>
    </location>
</feature>
<feature type="domain" description="Fe2OG dioxygenase" evidence="3">
    <location>
        <begin position="134"/>
        <end position="239"/>
    </location>
</feature>
<feature type="region of interest" description="Disordered" evidence="4">
    <location>
        <begin position="373"/>
        <end position="435"/>
    </location>
</feature>
<feature type="compositionally biased region" description="Polar residues" evidence="4">
    <location>
        <begin position="400"/>
        <end position="416"/>
    </location>
</feature>
<feature type="binding site" evidence="1 3">
    <location>
        <position position="155"/>
    </location>
    <ligand>
        <name>Fe cation</name>
        <dbReference type="ChEBI" id="CHEBI:24875"/>
    </ligand>
</feature>
<feature type="binding site" evidence="3">
    <location>
        <position position="157"/>
    </location>
    <ligand>
        <name>Fe cation</name>
        <dbReference type="ChEBI" id="CHEBI:24875"/>
    </ligand>
</feature>
<feature type="binding site" evidence="1">
    <location>
        <position position="169"/>
    </location>
    <ligand>
        <name>2-oxoglutarate</name>
        <dbReference type="ChEBI" id="CHEBI:16810"/>
    </ligand>
</feature>
<feature type="binding site" evidence="1 3">
    <location>
        <position position="218"/>
    </location>
    <ligand>
        <name>Fe cation</name>
        <dbReference type="ChEBI" id="CHEBI:24875"/>
    </ligand>
</feature>
<feature type="binding site" evidence="1 3">
    <location>
        <position position="230"/>
    </location>
    <ligand>
        <name>2-oxoglutarate</name>
        <dbReference type="ChEBI" id="CHEBI:16810"/>
    </ligand>
</feature>
<evidence type="ECO:0000250" key="1">
    <source>
        <dbReference type="UniProtKB" id="P40032"/>
    </source>
</evidence>
<evidence type="ECO:0000250" key="2">
    <source>
        <dbReference type="UniProtKB" id="Q8N543"/>
    </source>
</evidence>
<evidence type="ECO:0000255" key="3">
    <source>
        <dbReference type="PROSITE-ProRule" id="PRU00805"/>
    </source>
</evidence>
<evidence type="ECO:0000256" key="4">
    <source>
        <dbReference type="SAM" id="MobiDB-lite"/>
    </source>
</evidence>
<evidence type="ECO:0000305" key="5"/>
<protein>
    <recommendedName>
        <fullName>Prolyl 3-hydroxylase OGFOD1</fullName>
        <ecNumber>1.14.11.-</ecNumber>
    </recommendedName>
    <alternativeName>
        <fullName>2-oxoglutarate and iron-dependent oxygenase domain-containing protein 1</fullName>
    </alternativeName>
    <alternativeName>
        <fullName>uS12 prolyl 3-hydroxylase</fullName>
    </alternativeName>
</protein>
<dbReference type="EC" id="1.14.11.-"/>
<dbReference type="EMBL" id="CR861181">
    <property type="protein sequence ID" value="CAH93253.1"/>
    <property type="molecule type" value="mRNA"/>
</dbReference>
<dbReference type="RefSeq" id="NP_001128994.1">
    <property type="nucleotide sequence ID" value="NM_001135522.1"/>
</dbReference>
<dbReference type="SMR" id="Q5R4R3"/>
<dbReference type="FunCoup" id="Q5R4R3">
    <property type="interactions" value="2632"/>
</dbReference>
<dbReference type="STRING" id="9601.ENSPPYP00000008320"/>
<dbReference type="GeneID" id="100190834"/>
<dbReference type="KEGG" id="pon:100190834"/>
<dbReference type="CTD" id="55239"/>
<dbReference type="eggNOG" id="KOG3844">
    <property type="taxonomic scope" value="Eukaryota"/>
</dbReference>
<dbReference type="InParanoid" id="Q5R4R3"/>
<dbReference type="OrthoDB" id="430522at2759"/>
<dbReference type="Proteomes" id="UP000001595">
    <property type="component" value="Unplaced"/>
</dbReference>
<dbReference type="GO" id="GO:0010494">
    <property type="term" value="C:cytoplasmic stress granule"/>
    <property type="evidence" value="ECO:0000250"/>
    <property type="project" value="UniProtKB"/>
</dbReference>
<dbReference type="GO" id="GO:0005634">
    <property type="term" value="C:nucleus"/>
    <property type="evidence" value="ECO:0007669"/>
    <property type="project" value="UniProtKB-SubCell"/>
</dbReference>
<dbReference type="GO" id="GO:0005506">
    <property type="term" value="F:iron ion binding"/>
    <property type="evidence" value="ECO:0007669"/>
    <property type="project" value="InterPro"/>
</dbReference>
<dbReference type="GO" id="GO:0031418">
    <property type="term" value="F:L-ascorbic acid binding"/>
    <property type="evidence" value="ECO:0007669"/>
    <property type="project" value="UniProtKB-KW"/>
</dbReference>
<dbReference type="GO" id="GO:0031544">
    <property type="term" value="F:peptidyl-proline 3-dioxygenase activity"/>
    <property type="evidence" value="ECO:0000250"/>
    <property type="project" value="UniProtKB"/>
</dbReference>
<dbReference type="GO" id="GO:0031543">
    <property type="term" value="F:peptidyl-proline dioxygenase activity"/>
    <property type="evidence" value="ECO:0000250"/>
    <property type="project" value="UniProtKB"/>
</dbReference>
<dbReference type="GO" id="GO:0008283">
    <property type="term" value="P:cell population proliferation"/>
    <property type="evidence" value="ECO:0000250"/>
    <property type="project" value="UniProtKB"/>
</dbReference>
<dbReference type="GO" id="GO:0018126">
    <property type="term" value="P:protein hydroxylation"/>
    <property type="evidence" value="ECO:0000250"/>
    <property type="project" value="UniProtKB"/>
</dbReference>
<dbReference type="GO" id="GO:0006449">
    <property type="term" value="P:regulation of translational termination"/>
    <property type="evidence" value="ECO:0000250"/>
    <property type="project" value="UniProtKB"/>
</dbReference>
<dbReference type="GO" id="GO:0034063">
    <property type="term" value="P:stress granule assembly"/>
    <property type="evidence" value="ECO:0000250"/>
    <property type="project" value="UniProtKB"/>
</dbReference>
<dbReference type="FunFam" id="2.60.120.620:FF:000010">
    <property type="entry name" value="Prolyl 3-hydroxylase OGFOD1 isoform 1"/>
    <property type="match status" value="1"/>
</dbReference>
<dbReference type="Gene3D" id="2.60.120.620">
    <property type="entry name" value="q2cbj1_9rhob like domain"/>
    <property type="match status" value="2"/>
</dbReference>
<dbReference type="InterPro" id="IPR005123">
    <property type="entry name" value="Oxoglu/Fe-dep_dioxygenase_dom"/>
</dbReference>
<dbReference type="InterPro" id="IPR019601">
    <property type="entry name" value="Oxoglutarate/Fe-dep_Oase_C"/>
</dbReference>
<dbReference type="InterPro" id="IPR006620">
    <property type="entry name" value="Pro_4_hyd_alph"/>
</dbReference>
<dbReference type="InterPro" id="IPR039558">
    <property type="entry name" value="TPA1/OFD1_N"/>
</dbReference>
<dbReference type="InterPro" id="IPR051842">
    <property type="entry name" value="uS12_prolyl_hydroxylase"/>
</dbReference>
<dbReference type="PANTHER" id="PTHR12117">
    <property type="entry name" value="HISTONE ACETYLTRANSFERASE COMPLEX"/>
    <property type="match status" value="1"/>
</dbReference>
<dbReference type="PANTHER" id="PTHR12117:SF0">
    <property type="entry name" value="PROLYL 3-HYDROXYLASE OGFOD1"/>
    <property type="match status" value="1"/>
</dbReference>
<dbReference type="Pfam" id="PF13661">
    <property type="entry name" value="2OG-FeII_Oxy_4"/>
    <property type="match status" value="1"/>
</dbReference>
<dbReference type="Pfam" id="PF10637">
    <property type="entry name" value="Ofd1_CTDD"/>
    <property type="match status" value="1"/>
</dbReference>
<dbReference type="SMART" id="SM00702">
    <property type="entry name" value="P4Hc"/>
    <property type="match status" value="1"/>
</dbReference>
<dbReference type="PROSITE" id="PS51471">
    <property type="entry name" value="FE2OG_OXY"/>
    <property type="match status" value="1"/>
</dbReference>
<proteinExistence type="evidence at transcript level"/>
<gene>
    <name type="primary">OGFOD1</name>
</gene>
<sequence>MNGKRPAEPGPARVGKKRKKEVMAEFSDAVTEETLKKQVAEAWSRRTPFSHEVIVMDMDPFLHCVIPNFIQSQDFLEGLQKELMNLDFHEKYNDLYKFQQSDDLKKRREPHISALRKILFEDFRSWLSDISKIDLESTIDMSCAKYEFTDALLCHDDELEGRRIAFILYLVPPWDRSLGGTLDLYSIDEHFQPKQIVKSLIPSWNKLVFFEVSPVSFHQVSEVLSEEKSRLSISGWFHGPSLTRPPNHFEPPIPRSPHIPQDHEILYDWINPTYLDMDYQVQIQEEFEESSEILLKEFLKPEKFMKVCEALEHGDVEWSSRGPPNKRFYEKAEESKLPEILKECMKLFHSEALFLLLSNFTGLKLHFLAPSEEDEMNDKKEAEAADITEEGTSHSPPEPENNQTAISNNSQQSNEQTDPEPEENETKKESSVPTCQGELRRWKTGHYTLIHDHSKAEFALDLILYCGCEGWEPEYGGFTSYIAKGEDEELLTVNPESNSLALVYRDRETLKFVKHINHRSLEQKKTFPNRTGFWDFSFIYYE</sequence>